<evidence type="ECO:0000255" key="1">
    <source>
        <dbReference type="HAMAP-Rule" id="MF_00013"/>
    </source>
</evidence>
<evidence type="ECO:0000255" key="2">
    <source>
        <dbReference type="PROSITE-ProRule" id="PRU01067"/>
    </source>
</evidence>
<accession>A4Y9G1</accession>
<proteinExistence type="inferred from homology"/>
<sequence length="219" mass="24309">MPLQDTTLHIRHLGKQDYESVWHAMQHYTDTRNSESPDELWIVEHPPVFTQGQAGKSEHILNAGDIPVIQVDRGGQVTYHGPGQLVVYPLIDIKRSKIGVRQLVTHIEQSIINMLAKYDIQAYAKADAPGVYVNERKIASLGLRIRRGCSFHGLALNVDMDLAPFRRINPCGYAGLEMVQSKALGGPQTVTEAGEQLTITFSQLLGYQHLVHHQGLAAS</sequence>
<feature type="chain" id="PRO_0000321670" description="Octanoyltransferase">
    <location>
        <begin position="1"/>
        <end position="219"/>
    </location>
</feature>
<feature type="domain" description="BPL/LPL catalytic" evidence="2">
    <location>
        <begin position="34"/>
        <end position="209"/>
    </location>
</feature>
<feature type="active site" description="Acyl-thioester intermediate" evidence="1">
    <location>
        <position position="171"/>
    </location>
</feature>
<feature type="binding site" evidence="1">
    <location>
        <begin position="73"/>
        <end position="80"/>
    </location>
    <ligand>
        <name>substrate</name>
    </ligand>
</feature>
<feature type="binding site" evidence="1">
    <location>
        <begin position="140"/>
        <end position="142"/>
    </location>
    <ligand>
        <name>substrate</name>
    </ligand>
</feature>
<feature type="binding site" evidence="1">
    <location>
        <begin position="153"/>
        <end position="155"/>
    </location>
    <ligand>
        <name>substrate</name>
    </ligand>
</feature>
<feature type="site" description="Lowers pKa of active site Cys" evidence="1">
    <location>
        <position position="137"/>
    </location>
</feature>
<comment type="function">
    <text evidence="1">Catalyzes the transfer of endogenously produced octanoic acid from octanoyl-acyl-carrier-protein onto the lipoyl domains of lipoate-dependent enzymes. Lipoyl-ACP can also act as a substrate although octanoyl-ACP is likely to be the physiological substrate.</text>
</comment>
<comment type="catalytic activity">
    <reaction evidence="1">
        <text>octanoyl-[ACP] + L-lysyl-[protein] = N(6)-octanoyl-L-lysyl-[protein] + holo-[ACP] + H(+)</text>
        <dbReference type="Rhea" id="RHEA:17665"/>
        <dbReference type="Rhea" id="RHEA-COMP:9636"/>
        <dbReference type="Rhea" id="RHEA-COMP:9685"/>
        <dbReference type="Rhea" id="RHEA-COMP:9752"/>
        <dbReference type="Rhea" id="RHEA-COMP:9928"/>
        <dbReference type="ChEBI" id="CHEBI:15378"/>
        <dbReference type="ChEBI" id="CHEBI:29969"/>
        <dbReference type="ChEBI" id="CHEBI:64479"/>
        <dbReference type="ChEBI" id="CHEBI:78463"/>
        <dbReference type="ChEBI" id="CHEBI:78809"/>
        <dbReference type="EC" id="2.3.1.181"/>
    </reaction>
</comment>
<comment type="pathway">
    <text evidence="1">Protein modification; protein lipoylation via endogenous pathway; protein N(6)-(lipoyl)lysine from octanoyl-[acyl-carrier-protein]: step 1/2.</text>
</comment>
<comment type="subcellular location">
    <subcellularLocation>
        <location evidence="1">Cytoplasm</location>
    </subcellularLocation>
</comment>
<comment type="miscellaneous">
    <text evidence="1">In the reaction, the free carboxyl group of octanoic acid is attached via an amide linkage to the epsilon-amino group of a specific lysine residue of lipoyl domains of lipoate-dependent enzymes.</text>
</comment>
<comment type="similarity">
    <text evidence="1">Belongs to the LipB family.</text>
</comment>
<dbReference type="EC" id="2.3.1.181" evidence="1"/>
<dbReference type="EMBL" id="CP000681">
    <property type="protein sequence ID" value="ABP76594.1"/>
    <property type="molecule type" value="Genomic_DNA"/>
</dbReference>
<dbReference type="SMR" id="A4Y9G1"/>
<dbReference type="STRING" id="319224.Sputcn32_2875"/>
<dbReference type="KEGG" id="spc:Sputcn32_2875"/>
<dbReference type="eggNOG" id="COG0321">
    <property type="taxonomic scope" value="Bacteria"/>
</dbReference>
<dbReference type="HOGENOM" id="CLU_035168_3_1_6"/>
<dbReference type="UniPathway" id="UPA00538">
    <property type="reaction ID" value="UER00592"/>
</dbReference>
<dbReference type="GO" id="GO:0005737">
    <property type="term" value="C:cytoplasm"/>
    <property type="evidence" value="ECO:0007669"/>
    <property type="project" value="UniProtKB-SubCell"/>
</dbReference>
<dbReference type="GO" id="GO:0033819">
    <property type="term" value="F:lipoyl(octanoyl) transferase activity"/>
    <property type="evidence" value="ECO:0007669"/>
    <property type="project" value="UniProtKB-EC"/>
</dbReference>
<dbReference type="GO" id="GO:0036211">
    <property type="term" value="P:protein modification process"/>
    <property type="evidence" value="ECO:0007669"/>
    <property type="project" value="InterPro"/>
</dbReference>
<dbReference type="CDD" id="cd16444">
    <property type="entry name" value="LipB"/>
    <property type="match status" value="1"/>
</dbReference>
<dbReference type="FunFam" id="3.30.930.10:FF:000020">
    <property type="entry name" value="Octanoyltransferase"/>
    <property type="match status" value="1"/>
</dbReference>
<dbReference type="Gene3D" id="3.30.930.10">
    <property type="entry name" value="Bira Bifunctional Protein, Domain 2"/>
    <property type="match status" value="1"/>
</dbReference>
<dbReference type="HAMAP" id="MF_00013">
    <property type="entry name" value="LipB"/>
    <property type="match status" value="1"/>
</dbReference>
<dbReference type="InterPro" id="IPR045864">
    <property type="entry name" value="aa-tRNA-synth_II/BPL/LPL"/>
</dbReference>
<dbReference type="InterPro" id="IPR004143">
    <property type="entry name" value="BPL_LPL_catalytic"/>
</dbReference>
<dbReference type="InterPro" id="IPR000544">
    <property type="entry name" value="Octanoyltransferase"/>
</dbReference>
<dbReference type="InterPro" id="IPR020605">
    <property type="entry name" value="Octanoyltransferase_CS"/>
</dbReference>
<dbReference type="NCBIfam" id="TIGR00214">
    <property type="entry name" value="lipB"/>
    <property type="match status" value="1"/>
</dbReference>
<dbReference type="NCBIfam" id="NF010922">
    <property type="entry name" value="PRK14342.1"/>
    <property type="match status" value="1"/>
</dbReference>
<dbReference type="PANTHER" id="PTHR10993:SF7">
    <property type="entry name" value="LIPOYLTRANSFERASE 2, MITOCHONDRIAL-RELATED"/>
    <property type="match status" value="1"/>
</dbReference>
<dbReference type="PANTHER" id="PTHR10993">
    <property type="entry name" value="OCTANOYLTRANSFERASE"/>
    <property type="match status" value="1"/>
</dbReference>
<dbReference type="Pfam" id="PF21948">
    <property type="entry name" value="LplA-B_cat"/>
    <property type="match status" value="1"/>
</dbReference>
<dbReference type="PIRSF" id="PIRSF016262">
    <property type="entry name" value="LPLase"/>
    <property type="match status" value="1"/>
</dbReference>
<dbReference type="SUPFAM" id="SSF55681">
    <property type="entry name" value="Class II aaRS and biotin synthetases"/>
    <property type="match status" value="1"/>
</dbReference>
<dbReference type="PROSITE" id="PS51733">
    <property type="entry name" value="BPL_LPL_CATALYTIC"/>
    <property type="match status" value="1"/>
</dbReference>
<dbReference type="PROSITE" id="PS01313">
    <property type="entry name" value="LIPB"/>
    <property type="match status" value="1"/>
</dbReference>
<name>LIPB_SHEPC</name>
<organism>
    <name type="scientific">Shewanella putrefaciens (strain CN-32 / ATCC BAA-453)</name>
    <dbReference type="NCBI Taxonomy" id="319224"/>
    <lineage>
        <taxon>Bacteria</taxon>
        <taxon>Pseudomonadati</taxon>
        <taxon>Pseudomonadota</taxon>
        <taxon>Gammaproteobacteria</taxon>
        <taxon>Alteromonadales</taxon>
        <taxon>Shewanellaceae</taxon>
        <taxon>Shewanella</taxon>
    </lineage>
</organism>
<reference key="1">
    <citation type="submission" date="2007-04" db="EMBL/GenBank/DDBJ databases">
        <title>Complete sequence of Shewanella putrefaciens CN-32.</title>
        <authorList>
            <consortium name="US DOE Joint Genome Institute"/>
            <person name="Copeland A."/>
            <person name="Lucas S."/>
            <person name="Lapidus A."/>
            <person name="Barry K."/>
            <person name="Detter J.C."/>
            <person name="Glavina del Rio T."/>
            <person name="Hammon N."/>
            <person name="Israni S."/>
            <person name="Dalin E."/>
            <person name="Tice H."/>
            <person name="Pitluck S."/>
            <person name="Chain P."/>
            <person name="Malfatti S."/>
            <person name="Shin M."/>
            <person name="Vergez L."/>
            <person name="Schmutz J."/>
            <person name="Larimer F."/>
            <person name="Land M."/>
            <person name="Hauser L."/>
            <person name="Kyrpides N."/>
            <person name="Mikhailova N."/>
            <person name="Romine M.F."/>
            <person name="Fredrickson J."/>
            <person name="Tiedje J."/>
            <person name="Richardson P."/>
        </authorList>
    </citation>
    <scope>NUCLEOTIDE SEQUENCE [LARGE SCALE GENOMIC DNA]</scope>
    <source>
        <strain>CN-32 / ATCC BAA-453</strain>
    </source>
</reference>
<keyword id="KW-0012">Acyltransferase</keyword>
<keyword id="KW-0963">Cytoplasm</keyword>
<keyword id="KW-0808">Transferase</keyword>
<protein>
    <recommendedName>
        <fullName evidence="1">Octanoyltransferase</fullName>
        <ecNumber evidence="1">2.3.1.181</ecNumber>
    </recommendedName>
    <alternativeName>
        <fullName evidence="1">Lipoate-protein ligase B</fullName>
    </alternativeName>
    <alternativeName>
        <fullName evidence="1">Lipoyl/octanoyl transferase</fullName>
    </alternativeName>
    <alternativeName>
        <fullName evidence="1">Octanoyl-[acyl-carrier-protein]-protein N-octanoyltransferase</fullName>
    </alternativeName>
</protein>
<gene>
    <name evidence="1" type="primary">lipB</name>
    <name type="ordered locus">Sputcn32_2875</name>
</gene>